<accession>Q72XB5</accession>
<dbReference type="EC" id="2.5.1.7" evidence="1"/>
<dbReference type="EMBL" id="AE017194">
    <property type="protein sequence ID" value="AAS44363.1"/>
    <property type="molecule type" value="Genomic_DNA"/>
</dbReference>
<dbReference type="SMR" id="Q72XB5"/>
<dbReference type="KEGG" id="bca:BCE_5463"/>
<dbReference type="HOGENOM" id="CLU_027387_0_0_9"/>
<dbReference type="UniPathway" id="UPA00219"/>
<dbReference type="Proteomes" id="UP000002527">
    <property type="component" value="Chromosome"/>
</dbReference>
<dbReference type="GO" id="GO:0005737">
    <property type="term" value="C:cytoplasm"/>
    <property type="evidence" value="ECO:0007669"/>
    <property type="project" value="UniProtKB-SubCell"/>
</dbReference>
<dbReference type="GO" id="GO:0008760">
    <property type="term" value="F:UDP-N-acetylglucosamine 1-carboxyvinyltransferase activity"/>
    <property type="evidence" value="ECO:0007669"/>
    <property type="project" value="UniProtKB-UniRule"/>
</dbReference>
<dbReference type="GO" id="GO:0051301">
    <property type="term" value="P:cell division"/>
    <property type="evidence" value="ECO:0007669"/>
    <property type="project" value="UniProtKB-KW"/>
</dbReference>
<dbReference type="GO" id="GO:0071555">
    <property type="term" value="P:cell wall organization"/>
    <property type="evidence" value="ECO:0007669"/>
    <property type="project" value="UniProtKB-KW"/>
</dbReference>
<dbReference type="GO" id="GO:0009252">
    <property type="term" value="P:peptidoglycan biosynthetic process"/>
    <property type="evidence" value="ECO:0007669"/>
    <property type="project" value="UniProtKB-UniRule"/>
</dbReference>
<dbReference type="GO" id="GO:0008360">
    <property type="term" value="P:regulation of cell shape"/>
    <property type="evidence" value="ECO:0007669"/>
    <property type="project" value="UniProtKB-KW"/>
</dbReference>
<dbReference type="GO" id="GO:0019277">
    <property type="term" value="P:UDP-N-acetylgalactosamine biosynthetic process"/>
    <property type="evidence" value="ECO:0007669"/>
    <property type="project" value="InterPro"/>
</dbReference>
<dbReference type="CDD" id="cd01555">
    <property type="entry name" value="UdpNAET"/>
    <property type="match status" value="1"/>
</dbReference>
<dbReference type="FunFam" id="3.65.10.10:FF:000001">
    <property type="entry name" value="UDP-N-acetylglucosamine 1-carboxyvinyltransferase"/>
    <property type="match status" value="1"/>
</dbReference>
<dbReference type="Gene3D" id="3.65.10.10">
    <property type="entry name" value="Enolpyruvate transferase domain"/>
    <property type="match status" value="2"/>
</dbReference>
<dbReference type="HAMAP" id="MF_00111">
    <property type="entry name" value="MurA"/>
    <property type="match status" value="1"/>
</dbReference>
<dbReference type="InterPro" id="IPR001986">
    <property type="entry name" value="Enolpyruvate_Tfrase_dom"/>
</dbReference>
<dbReference type="InterPro" id="IPR036968">
    <property type="entry name" value="Enolpyruvate_Tfrase_sf"/>
</dbReference>
<dbReference type="InterPro" id="IPR050068">
    <property type="entry name" value="MurA_subfamily"/>
</dbReference>
<dbReference type="InterPro" id="IPR013792">
    <property type="entry name" value="RNA3'P_cycl/enolpyr_Trfase_a/b"/>
</dbReference>
<dbReference type="InterPro" id="IPR005750">
    <property type="entry name" value="UDP_GlcNAc_COvinyl_MurA"/>
</dbReference>
<dbReference type="NCBIfam" id="TIGR01072">
    <property type="entry name" value="murA"/>
    <property type="match status" value="1"/>
</dbReference>
<dbReference type="NCBIfam" id="NF006873">
    <property type="entry name" value="PRK09369.1"/>
    <property type="match status" value="1"/>
</dbReference>
<dbReference type="NCBIfam" id="NF009470">
    <property type="entry name" value="PRK12830.1"/>
    <property type="match status" value="1"/>
</dbReference>
<dbReference type="PANTHER" id="PTHR43783">
    <property type="entry name" value="UDP-N-ACETYLGLUCOSAMINE 1-CARBOXYVINYLTRANSFERASE"/>
    <property type="match status" value="1"/>
</dbReference>
<dbReference type="PANTHER" id="PTHR43783:SF2">
    <property type="entry name" value="UDP-N-ACETYLGLUCOSAMINE 1-CARBOXYVINYLTRANSFERASE 2"/>
    <property type="match status" value="1"/>
</dbReference>
<dbReference type="Pfam" id="PF00275">
    <property type="entry name" value="EPSP_synthase"/>
    <property type="match status" value="1"/>
</dbReference>
<dbReference type="SUPFAM" id="SSF55205">
    <property type="entry name" value="EPT/RTPC-like"/>
    <property type="match status" value="1"/>
</dbReference>
<name>MURA2_BACC1</name>
<keyword id="KW-0131">Cell cycle</keyword>
<keyword id="KW-0132">Cell division</keyword>
<keyword id="KW-0133">Cell shape</keyword>
<keyword id="KW-0961">Cell wall biogenesis/degradation</keyword>
<keyword id="KW-0963">Cytoplasm</keyword>
<keyword id="KW-0573">Peptidoglycan synthesis</keyword>
<keyword id="KW-0670">Pyruvate</keyword>
<keyword id="KW-0808">Transferase</keyword>
<proteinExistence type="inferred from homology"/>
<sequence length="429" mass="45866">MEKLLIEGGRALNGTIRVSGAKNSAVALIPATILADTPVTIGGVPNISDVKMLGDLLEEIGGRVTYGQEEEMVVDPSNMVAMPLPNGKVKKLRASYYLMGAMLGRFKKAVIGLPGGCHLGPRPIDQHIKGFEALGAHVTNEQGAIYLRADELRGARIYLDVVSVGATINIMLAAVRAKGRTVIENAAKEPEIIDVATLLTSMGARIKGAGTDVIRIDGVDSLHGCHHTIIPDRIEAGTYMILGAASGGEVTVDNVIPQHLESVTAKLREAGVQVETNDDQITVNGDRRLKVVDIKTLVYPGFPTDLQQPFTTLLTKAHGTGVVTDTIYGARFKHIDELRRMNAQIKVEGRSAIVTGPVLLQGAKVKASDLRAGAALVIAGLMADGITEVTGLEHIDRGYENIVDKLKGLGANIWREQMTKQEIEEMKNA</sequence>
<comment type="function">
    <text evidence="1">Cell wall formation. Adds enolpyruvyl to UDP-N-acetylglucosamine.</text>
</comment>
<comment type="catalytic activity">
    <reaction evidence="1">
        <text>phosphoenolpyruvate + UDP-N-acetyl-alpha-D-glucosamine = UDP-N-acetyl-3-O-(1-carboxyvinyl)-alpha-D-glucosamine + phosphate</text>
        <dbReference type="Rhea" id="RHEA:18681"/>
        <dbReference type="ChEBI" id="CHEBI:43474"/>
        <dbReference type="ChEBI" id="CHEBI:57705"/>
        <dbReference type="ChEBI" id="CHEBI:58702"/>
        <dbReference type="ChEBI" id="CHEBI:68483"/>
        <dbReference type="EC" id="2.5.1.7"/>
    </reaction>
</comment>
<comment type="pathway">
    <text evidence="1">Cell wall biogenesis; peptidoglycan biosynthesis.</text>
</comment>
<comment type="subcellular location">
    <subcellularLocation>
        <location evidence="1">Cytoplasm</location>
    </subcellularLocation>
</comment>
<comment type="similarity">
    <text evidence="1">Belongs to the EPSP synthase family. MurA subfamily.</text>
</comment>
<gene>
    <name evidence="1" type="primary">murA2</name>
    <name type="ordered locus">BCE_5463</name>
</gene>
<organism>
    <name type="scientific">Bacillus cereus (strain ATCC 10987 / NRS 248)</name>
    <dbReference type="NCBI Taxonomy" id="222523"/>
    <lineage>
        <taxon>Bacteria</taxon>
        <taxon>Bacillati</taxon>
        <taxon>Bacillota</taxon>
        <taxon>Bacilli</taxon>
        <taxon>Bacillales</taxon>
        <taxon>Bacillaceae</taxon>
        <taxon>Bacillus</taxon>
        <taxon>Bacillus cereus group</taxon>
    </lineage>
</organism>
<feature type="chain" id="PRO_0000231154" description="UDP-N-acetylglucosamine 1-carboxyvinyltransferase 2">
    <location>
        <begin position="1"/>
        <end position="429"/>
    </location>
</feature>
<feature type="active site" description="Proton donor" evidence="1">
    <location>
        <position position="117"/>
    </location>
</feature>
<feature type="binding site" evidence="1">
    <location>
        <begin position="22"/>
        <end position="23"/>
    </location>
    <ligand>
        <name>phosphoenolpyruvate</name>
        <dbReference type="ChEBI" id="CHEBI:58702"/>
    </ligand>
</feature>
<feature type="binding site" evidence="1">
    <location>
        <position position="93"/>
    </location>
    <ligand>
        <name>UDP-N-acetyl-alpha-D-glucosamine</name>
        <dbReference type="ChEBI" id="CHEBI:57705"/>
    </ligand>
</feature>
<feature type="binding site" evidence="1">
    <location>
        <begin position="122"/>
        <end position="126"/>
    </location>
    <ligand>
        <name>UDP-N-acetyl-alpha-D-glucosamine</name>
        <dbReference type="ChEBI" id="CHEBI:57705"/>
    </ligand>
</feature>
<feature type="binding site" evidence="1">
    <location>
        <position position="305"/>
    </location>
    <ligand>
        <name>UDP-N-acetyl-alpha-D-glucosamine</name>
        <dbReference type="ChEBI" id="CHEBI:57705"/>
    </ligand>
</feature>
<feature type="binding site" evidence="1">
    <location>
        <position position="327"/>
    </location>
    <ligand>
        <name>UDP-N-acetyl-alpha-D-glucosamine</name>
        <dbReference type="ChEBI" id="CHEBI:57705"/>
    </ligand>
</feature>
<feature type="modified residue" description="2-(S-cysteinyl)pyruvic acid O-phosphothioketal" evidence="1">
    <location>
        <position position="117"/>
    </location>
</feature>
<reference key="1">
    <citation type="journal article" date="2004" name="Nucleic Acids Res.">
        <title>The genome sequence of Bacillus cereus ATCC 10987 reveals metabolic adaptations and a large plasmid related to Bacillus anthracis pXO1.</title>
        <authorList>
            <person name="Rasko D.A."/>
            <person name="Ravel J."/>
            <person name="Oekstad O.A."/>
            <person name="Helgason E."/>
            <person name="Cer R.Z."/>
            <person name="Jiang L."/>
            <person name="Shores K.A."/>
            <person name="Fouts D.E."/>
            <person name="Tourasse N.J."/>
            <person name="Angiuoli S.V."/>
            <person name="Kolonay J.F."/>
            <person name="Nelson W.C."/>
            <person name="Kolstoe A.-B."/>
            <person name="Fraser C.M."/>
            <person name="Read T.D."/>
        </authorList>
    </citation>
    <scope>NUCLEOTIDE SEQUENCE [LARGE SCALE GENOMIC DNA]</scope>
    <source>
        <strain>ATCC 10987 / NRS 248</strain>
    </source>
</reference>
<protein>
    <recommendedName>
        <fullName evidence="1">UDP-N-acetylglucosamine 1-carboxyvinyltransferase 2</fullName>
        <ecNumber evidence="1">2.5.1.7</ecNumber>
    </recommendedName>
    <alternativeName>
        <fullName evidence="1">Enoylpyruvate transferase 2</fullName>
    </alternativeName>
    <alternativeName>
        <fullName evidence="1">UDP-N-acetylglucosamine enolpyruvyl transferase 2</fullName>
        <shortName evidence="1">EPT 2</shortName>
    </alternativeName>
</protein>
<evidence type="ECO:0000255" key="1">
    <source>
        <dbReference type="HAMAP-Rule" id="MF_00111"/>
    </source>
</evidence>